<sequence>MANTNSAKKRIQIAERNRLENKNYKSTVRTLMKRCFVACGIFEKEPGDESKADLQKTFNLAFSKIDKAVKKGVLHKNTGANQKSRLSVALKKVLKEVV</sequence>
<protein>
    <recommendedName>
        <fullName evidence="1">Small ribosomal subunit protein bS20</fullName>
    </recommendedName>
    <alternativeName>
        <fullName evidence="2">30S ribosomal protein S20</fullName>
    </alternativeName>
</protein>
<proteinExistence type="inferred from homology"/>
<gene>
    <name evidence="1" type="primary">rpsT</name>
    <name evidence="1" type="synonym">rps20</name>
    <name type="ordered locus">PMN2A_1018</name>
</gene>
<organism>
    <name type="scientific">Prochlorococcus marinus (strain NATL2A)</name>
    <dbReference type="NCBI Taxonomy" id="59920"/>
    <lineage>
        <taxon>Bacteria</taxon>
        <taxon>Bacillati</taxon>
        <taxon>Cyanobacteriota</taxon>
        <taxon>Cyanophyceae</taxon>
        <taxon>Synechococcales</taxon>
        <taxon>Prochlorococcaceae</taxon>
        <taxon>Prochlorococcus</taxon>
    </lineage>
</organism>
<feature type="chain" id="PRO_0000224977" description="Small ribosomal subunit protein bS20">
    <location>
        <begin position="1"/>
        <end position="98"/>
    </location>
</feature>
<dbReference type="EMBL" id="CP000095">
    <property type="protein sequence ID" value="AAZ58508.1"/>
    <property type="molecule type" value="Genomic_DNA"/>
</dbReference>
<dbReference type="RefSeq" id="WP_011295363.1">
    <property type="nucleotide sequence ID" value="NC_007335.2"/>
</dbReference>
<dbReference type="SMR" id="Q46J20"/>
<dbReference type="STRING" id="59920.PMN2A_1018"/>
<dbReference type="KEGG" id="pmn:PMN2A_1018"/>
<dbReference type="HOGENOM" id="CLU_160655_5_0_3"/>
<dbReference type="OrthoDB" id="9808392at2"/>
<dbReference type="PhylomeDB" id="Q46J20"/>
<dbReference type="Proteomes" id="UP000002535">
    <property type="component" value="Chromosome"/>
</dbReference>
<dbReference type="GO" id="GO:0015935">
    <property type="term" value="C:small ribosomal subunit"/>
    <property type="evidence" value="ECO:0007669"/>
    <property type="project" value="TreeGrafter"/>
</dbReference>
<dbReference type="GO" id="GO:0070181">
    <property type="term" value="F:small ribosomal subunit rRNA binding"/>
    <property type="evidence" value="ECO:0007669"/>
    <property type="project" value="TreeGrafter"/>
</dbReference>
<dbReference type="GO" id="GO:0003735">
    <property type="term" value="F:structural constituent of ribosome"/>
    <property type="evidence" value="ECO:0007669"/>
    <property type="project" value="InterPro"/>
</dbReference>
<dbReference type="GO" id="GO:0006412">
    <property type="term" value="P:translation"/>
    <property type="evidence" value="ECO:0007669"/>
    <property type="project" value="UniProtKB-UniRule"/>
</dbReference>
<dbReference type="FunFam" id="1.20.58.110:FF:000001">
    <property type="entry name" value="30S ribosomal protein S20"/>
    <property type="match status" value="1"/>
</dbReference>
<dbReference type="Gene3D" id="1.20.58.110">
    <property type="entry name" value="Ribosomal protein S20"/>
    <property type="match status" value="1"/>
</dbReference>
<dbReference type="HAMAP" id="MF_00500">
    <property type="entry name" value="Ribosomal_bS20"/>
    <property type="match status" value="1"/>
</dbReference>
<dbReference type="InterPro" id="IPR002583">
    <property type="entry name" value="Ribosomal_bS20"/>
</dbReference>
<dbReference type="InterPro" id="IPR036510">
    <property type="entry name" value="Ribosomal_bS20_sf"/>
</dbReference>
<dbReference type="NCBIfam" id="TIGR00029">
    <property type="entry name" value="S20"/>
    <property type="match status" value="1"/>
</dbReference>
<dbReference type="PANTHER" id="PTHR33398">
    <property type="entry name" value="30S RIBOSOMAL PROTEIN S20"/>
    <property type="match status" value="1"/>
</dbReference>
<dbReference type="PANTHER" id="PTHR33398:SF1">
    <property type="entry name" value="SMALL RIBOSOMAL SUBUNIT PROTEIN BS20C"/>
    <property type="match status" value="1"/>
</dbReference>
<dbReference type="Pfam" id="PF01649">
    <property type="entry name" value="Ribosomal_S20p"/>
    <property type="match status" value="1"/>
</dbReference>
<dbReference type="SUPFAM" id="SSF46992">
    <property type="entry name" value="Ribosomal protein S20"/>
    <property type="match status" value="1"/>
</dbReference>
<evidence type="ECO:0000255" key="1">
    <source>
        <dbReference type="HAMAP-Rule" id="MF_00500"/>
    </source>
</evidence>
<evidence type="ECO:0000305" key="2"/>
<accession>Q46J20</accession>
<name>RS20_PROMT</name>
<keyword id="KW-1185">Reference proteome</keyword>
<keyword id="KW-0687">Ribonucleoprotein</keyword>
<keyword id="KW-0689">Ribosomal protein</keyword>
<keyword id="KW-0694">RNA-binding</keyword>
<keyword id="KW-0699">rRNA-binding</keyword>
<reference key="1">
    <citation type="journal article" date="2007" name="PLoS Genet.">
        <title>Patterns and implications of gene gain and loss in the evolution of Prochlorococcus.</title>
        <authorList>
            <person name="Kettler G.C."/>
            <person name="Martiny A.C."/>
            <person name="Huang K."/>
            <person name="Zucker J."/>
            <person name="Coleman M.L."/>
            <person name="Rodrigue S."/>
            <person name="Chen F."/>
            <person name="Lapidus A."/>
            <person name="Ferriera S."/>
            <person name="Johnson J."/>
            <person name="Steglich C."/>
            <person name="Church G.M."/>
            <person name="Richardson P."/>
            <person name="Chisholm S.W."/>
        </authorList>
    </citation>
    <scope>NUCLEOTIDE SEQUENCE [LARGE SCALE GENOMIC DNA]</scope>
    <source>
        <strain>NATL2A</strain>
    </source>
</reference>
<comment type="function">
    <text evidence="1">Binds directly to 16S ribosomal RNA.</text>
</comment>
<comment type="similarity">
    <text evidence="1">Belongs to the bacterial ribosomal protein bS20 family.</text>
</comment>